<comment type="function">
    <text evidence="1">Catalyzes the addition and repair of the essential 3'-terminal CCA sequence in tRNAs without using a nucleic acid template. Adds these three nucleotides in the order of C, C, and A to the tRNA nucleotide-73, using CTP and ATP as substrates and producing inorganic pyrophosphate. tRNA 3'-terminal CCA addition is required both for tRNA processing and repair. Also involved in tRNA surveillance by mediating tandem CCA addition to generate a CCACCA at the 3' terminus of unstable tRNAs. While stable tRNAs receive only 3'-terminal CCA, unstable tRNAs are marked with CCACCA and rapidly degraded.</text>
</comment>
<comment type="catalytic activity">
    <reaction evidence="1">
        <text>a tRNA precursor + 2 CTP + ATP = a tRNA with a 3' CCA end + 3 diphosphate</text>
        <dbReference type="Rhea" id="RHEA:14433"/>
        <dbReference type="Rhea" id="RHEA-COMP:10465"/>
        <dbReference type="Rhea" id="RHEA-COMP:10468"/>
        <dbReference type="ChEBI" id="CHEBI:30616"/>
        <dbReference type="ChEBI" id="CHEBI:33019"/>
        <dbReference type="ChEBI" id="CHEBI:37563"/>
        <dbReference type="ChEBI" id="CHEBI:74896"/>
        <dbReference type="ChEBI" id="CHEBI:83071"/>
        <dbReference type="EC" id="2.7.7.72"/>
    </reaction>
</comment>
<comment type="catalytic activity">
    <reaction evidence="1">
        <text>a tRNA with a 3' CCA end + 2 CTP + ATP = a tRNA with a 3' CCACCA end + 3 diphosphate</text>
        <dbReference type="Rhea" id="RHEA:76235"/>
        <dbReference type="Rhea" id="RHEA-COMP:10468"/>
        <dbReference type="Rhea" id="RHEA-COMP:18655"/>
        <dbReference type="ChEBI" id="CHEBI:30616"/>
        <dbReference type="ChEBI" id="CHEBI:33019"/>
        <dbReference type="ChEBI" id="CHEBI:37563"/>
        <dbReference type="ChEBI" id="CHEBI:83071"/>
        <dbReference type="ChEBI" id="CHEBI:195187"/>
    </reaction>
    <physiologicalReaction direction="left-to-right" evidence="1">
        <dbReference type="Rhea" id="RHEA:76236"/>
    </physiologicalReaction>
</comment>
<comment type="cofactor">
    <cofactor evidence="1">
        <name>Mg(2+)</name>
        <dbReference type="ChEBI" id="CHEBI:18420"/>
    </cofactor>
    <text evidence="1">Magnesium is required for nucleotidyltransferase activity.</text>
</comment>
<comment type="cofactor">
    <cofactor evidence="1">
        <name>Ni(2+)</name>
        <dbReference type="ChEBI" id="CHEBI:49786"/>
    </cofactor>
    <text evidence="1">Nickel for phosphatase activity.</text>
</comment>
<comment type="subunit">
    <text evidence="1">Monomer. Can also form homodimers and oligomers.</text>
</comment>
<comment type="domain">
    <text evidence="1">Comprises two domains: an N-terminal domain containing the nucleotidyltransferase activity and a C-terminal HD domain associated with both phosphodiesterase and phosphatase activities.</text>
</comment>
<comment type="miscellaneous">
    <text evidence="1">A single active site specifically recognizes both ATP and CTP and is responsible for their addition.</text>
</comment>
<comment type="similarity">
    <text evidence="1">Belongs to the tRNA nucleotidyltransferase/poly(A) polymerase family. Bacterial CCA-adding enzyme type 1 subfamily.</text>
</comment>
<protein>
    <recommendedName>
        <fullName evidence="1">Multifunctional CCA protein</fullName>
    </recommendedName>
    <domain>
        <recommendedName>
            <fullName evidence="1">CCA-adding enzyme</fullName>
            <ecNumber evidence="1">2.7.7.72</ecNumber>
        </recommendedName>
        <alternativeName>
            <fullName evidence="1">CCA tRNA nucleotidyltransferase</fullName>
        </alternativeName>
        <alternativeName>
            <fullName evidence="1">tRNA CCA-pyrophosphorylase</fullName>
        </alternativeName>
        <alternativeName>
            <fullName evidence="1">tRNA adenylyl-/cytidylyl-transferase</fullName>
        </alternativeName>
        <alternativeName>
            <fullName evidence="1">tRNA nucleotidyltransferase</fullName>
        </alternativeName>
        <alternativeName>
            <fullName evidence="1">tRNA-NT</fullName>
        </alternativeName>
    </domain>
    <domain>
        <recommendedName>
            <fullName evidence="1">2'-nucleotidase</fullName>
            <ecNumber evidence="1">3.1.3.-</ecNumber>
        </recommendedName>
    </domain>
    <domain>
        <recommendedName>
            <fullName evidence="1">2',3'-cyclic phosphodiesterase</fullName>
            <ecNumber evidence="1">3.1.4.-</ecNumber>
        </recommendedName>
    </domain>
    <domain>
        <recommendedName>
            <fullName evidence="1">Phosphatase</fullName>
            <ecNumber evidence="1">3.1.3.-</ecNumber>
        </recommendedName>
    </domain>
</protein>
<accession>Q1C370</accession>
<organism>
    <name type="scientific">Yersinia pestis bv. Antiqua (strain Antiqua)</name>
    <dbReference type="NCBI Taxonomy" id="360102"/>
    <lineage>
        <taxon>Bacteria</taxon>
        <taxon>Pseudomonadati</taxon>
        <taxon>Pseudomonadota</taxon>
        <taxon>Gammaproteobacteria</taxon>
        <taxon>Enterobacterales</taxon>
        <taxon>Yersiniaceae</taxon>
        <taxon>Yersinia</taxon>
    </lineage>
</organism>
<gene>
    <name evidence="1" type="primary">cca</name>
    <name type="ordered locus">YPA_3140</name>
</gene>
<dbReference type="EC" id="2.7.7.72" evidence="1"/>
<dbReference type="EC" id="3.1.3.-" evidence="1"/>
<dbReference type="EC" id="3.1.4.-" evidence="1"/>
<dbReference type="EMBL" id="CP000308">
    <property type="protein sequence ID" value="ABG15102.1"/>
    <property type="molecule type" value="Genomic_DNA"/>
</dbReference>
<dbReference type="RefSeq" id="WP_002212197.1">
    <property type="nucleotide sequence ID" value="NZ_CP009906.1"/>
</dbReference>
<dbReference type="SMR" id="Q1C370"/>
<dbReference type="KEGG" id="ypa:YPA_3140"/>
<dbReference type="Proteomes" id="UP000001971">
    <property type="component" value="Chromosome"/>
</dbReference>
<dbReference type="GO" id="GO:0005524">
    <property type="term" value="F:ATP binding"/>
    <property type="evidence" value="ECO:0007669"/>
    <property type="project" value="UniProtKB-UniRule"/>
</dbReference>
<dbReference type="GO" id="GO:0004810">
    <property type="term" value="F:CCA tRNA nucleotidyltransferase activity"/>
    <property type="evidence" value="ECO:0007669"/>
    <property type="project" value="UniProtKB-UniRule"/>
</dbReference>
<dbReference type="GO" id="GO:0004112">
    <property type="term" value="F:cyclic-nucleotide phosphodiesterase activity"/>
    <property type="evidence" value="ECO:0007669"/>
    <property type="project" value="UniProtKB-UniRule"/>
</dbReference>
<dbReference type="GO" id="GO:0000287">
    <property type="term" value="F:magnesium ion binding"/>
    <property type="evidence" value="ECO:0007669"/>
    <property type="project" value="UniProtKB-UniRule"/>
</dbReference>
<dbReference type="GO" id="GO:0016791">
    <property type="term" value="F:phosphatase activity"/>
    <property type="evidence" value="ECO:0007669"/>
    <property type="project" value="UniProtKB-UniRule"/>
</dbReference>
<dbReference type="GO" id="GO:0000049">
    <property type="term" value="F:tRNA binding"/>
    <property type="evidence" value="ECO:0007669"/>
    <property type="project" value="UniProtKB-UniRule"/>
</dbReference>
<dbReference type="GO" id="GO:0042245">
    <property type="term" value="P:RNA repair"/>
    <property type="evidence" value="ECO:0007669"/>
    <property type="project" value="UniProtKB-KW"/>
</dbReference>
<dbReference type="GO" id="GO:0001680">
    <property type="term" value="P:tRNA 3'-terminal CCA addition"/>
    <property type="evidence" value="ECO:0007669"/>
    <property type="project" value="UniProtKB-UniRule"/>
</dbReference>
<dbReference type="CDD" id="cd00077">
    <property type="entry name" value="HDc"/>
    <property type="match status" value="1"/>
</dbReference>
<dbReference type="CDD" id="cd05398">
    <property type="entry name" value="NT_ClassII-CCAase"/>
    <property type="match status" value="1"/>
</dbReference>
<dbReference type="FunFam" id="1.10.3090.10:FF:000001">
    <property type="entry name" value="Multifunctional CCA protein"/>
    <property type="match status" value="1"/>
</dbReference>
<dbReference type="FunFam" id="3.30.460.10:FF:000016">
    <property type="entry name" value="Multifunctional CCA protein"/>
    <property type="match status" value="1"/>
</dbReference>
<dbReference type="Gene3D" id="3.30.460.10">
    <property type="entry name" value="Beta Polymerase, domain 2"/>
    <property type="match status" value="1"/>
</dbReference>
<dbReference type="Gene3D" id="1.10.3090.10">
    <property type="entry name" value="cca-adding enzyme, domain 2"/>
    <property type="match status" value="1"/>
</dbReference>
<dbReference type="HAMAP" id="MF_01261">
    <property type="entry name" value="CCA_bact_type1"/>
    <property type="match status" value="1"/>
</dbReference>
<dbReference type="HAMAP" id="MF_01262">
    <property type="entry name" value="CCA_bact_type2"/>
    <property type="match status" value="1"/>
</dbReference>
<dbReference type="InterPro" id="IPR012006">
    <property type="entry name" value="CCA_bact"/>
</dbReference>
<dbReference type="InterPro" id="IPR003607">
    <property type="entry name" value="HD/PDEase_dom"/>
</dbReference>
<dbReference type="InterPro" id="IPR006674">
    <property type="entry name" value="HD_domain"/>
</dbReference>
<dbReference type="InterPro" id="IPR043519">
    <property type="entry name" value="NT_sf"/>
</dbReference>
<dbReference type="InterPro" id="IPR002646">
    <property type="entry name" value="PolA_pol_head_dom"/>
</dbReference>
<dbReference type="InterPro" id="IPR032828">
    <property type="entry name" value="PolyA_RNA-bd"/>
</dbReference>
<dbReference type="InterPro" id="IPR050124">
    <property type="entry name" value="tRNA_CCA-adding_enzyme"/>
</dbReference>
<dbReference type="NCBIfam" id="NF008137">
    <property type="entry name" value="PRK10885.1"/>
    <property type="match status" value="1"/>
</dbReference>
<dbReference type="PANTHER" id="PTHR47545">
    <property type="entry name" value="MULTIFUNCTIONAL CCA PROTEIN"/>
    <property type="match status" value="1"/>
</dbReference>
<dbReference type="PANTHER" id="PTHR47545:SF1">
    <property type="entry name" value="MULTIFUNCTIONAL CCA PROTEIN"/>
    <property type="match status" value="1"/>
</dbReference>
<dbReference type="Pfam" id="PF01966">
    <property type="entry name" value="HD"/>
    <property type="match status" value="1"/>
</dbReference>
<dbReference type="Pfam" id="PF01743">
    <property type="entry name" value="PolyA_pol"/>
    <property type="match status" value="1"/>
</dbReference>
<dbReference type="Pfam" id="PF12627">
    <property type="entry name" value="PolyA_pol_RNAbd"/>
    <property type="match status" value="1"/>
</dbReference>
<dbReference type="PIRSF" id="PIRSF000813">
    <property type="entry name" value="CCA_bact"/>
    <property type="match status" value="1"/>
</dbReference>
<dbReference type="SMART" id="SM00471">
    <property type="entry name" value="HDc"/>
    <property type="match status" value="1"/>
</dbReference>
<dbReference type="SUPFAM" id="SSF81301">
    <property type="entry name" value="Nucleotidyltransferase"/>
    <property type="match status" value="1"/>
</dbReference>
<dbReference type="SUPFAM" id="SSF81891">
    <property type="entry name" value="Poly A polymerase C-terminal region-like"/>
    <property type="match status" value="1"/>
</dbReference>
<dbReference type="PROSITE" id="PS51831">
    <property type="entry name" value="HD"/>
    <property type="match status" value="1"/>
</dbReference>
<keyword id="KW-0067">ATP-binding</keyword>
<keyword id="KW-0378">Hydrolase</keyword>
<keyword id="KW-0460">Magnesium</keyword>
<keyword id="KW-0479">Metal-binding</keyword>
<keyword id="KW-0511">Multifunctional enzyme</keyword>
<keyword id="KW-0533">Nickel</keyword>
<keyword id="KW-0547">Nucleotide-binding</keyword>
<keyword id="KW-0548">Nucleotidyltransferase</keyword>
<keyword id="KW-0692">RNA repair</keyword>
<keyword id="KW-0694">RNA-binding</keyword>
<keyword id="KW-0808">Transferase</keyword>
<keyword id="KW-0819">tRNA processing</keyword>
<name>CCA_YERPA</name>
<feature type="chain" id="PRO_1000054311" description="Multifunctional CCA protein">
    <location>
        <begin position="1"/>
        <end position="412"/>
    </location>
</feature>
<feature type="domain" description="HD" evidence="1">
    <location>
        <begin position="228"/>
        <end position="329"/>
    </location>
</feature>
<feature type="binding site" evidence="1">
    <location>
        <position position="8"/>
    </location>
    <ligand>
        <name>ATP</name>
        <dbReference type="ChEBI" id="CHEBI:30616"/>
    </ligand>
</feature>
<feature type="binding site" evidence="1">
    <location>
        <position position="8"/>
    </location>
    <ligand>
        <name>CTP</name>
        <dbReference type="ChEBI" id="CHEBI:37563"/>
    </ligand>
</feature>
<feature type="binding site" evidence="1">
    <location>
        <position position="11"/>
    </location>
    <ligand>
        <name>ATP</name>
        <dbReference type="ChEBI" id="CHEBI:30616"/>
    </ligand>
</feature>
<feature type="binding site" evidence="1">
    <location>
        <position position="11"/>
    </location>
    <ligand>
        <name>CTP</name>
        <dbReference type="ChEBI" id="CHEBI:37563"/>
    </ligand>
</feature>
<feature type="binding site" evidence="1">
    <location>
        <position position="21"/>
    </location>
    <ligand>
        <name>Mg(2+)</name>
        <dbReference type="ChEBI" id="CHEBI:18420"/>
    </ligand>
</feature>
<feature type="binding site" evidence="1">
    <location>
        <position position="23"/>
    </location>
    <ligand>
        <name>Mg(2+)</name>
        <dbReference type="ChEBI" id="CHEBI:18420"/>
    </ligand>
</feature>
<feature type="binding site" evidence="1">
    <location>
        <position position="91"/>
    </location>
    <ligand>
        <name>ATP</name>
        <dbReference type="ChEBI" id="CHEBI:30616"/>
    </ligand>
</feature>
<feature type="binding site" evidence="1">
    <location>
        <position position="91"/>
    </location>
    <ligand>
        <name>CTP</name>
        <dbReference type="ChEBI" id="CHEBI:37563"/>
    </ligand>
</feature>
<feature type="binding site" evidence="1">
    <location>
        <position position="137"/>
    </location>
    <ligand>
        <name>ATP</name>
        <dbReference type="ChEBI" id="CHEBI:30616"/>
    </ligand>
</feature>
<feature type="binding site" evidence="1">
    <location>
        <position position="137"/>
    </location>
    <ligand>
        <name>CTP</name>
        <dbReference type="ChEBI" id="CHEBI:37563"/>
    </ligand>
</feature>
<feature type="binding site" evidence="1">
    <location>
        <position position="140"/>
    </location>
    <ligand>
        <name>ATP</name>
        <dbReference type="ChEBI" id="CHEBI:30616"/>
    </ligand>
</feature>
<feature type="binding site" evidence="1">
    <location>
        <position position="140"/>
    </location>
    <ligand>
        <name>CTP</name>
        <dbReference type="ChEBI" id="CHEBI:37563"/>
    </ligand>
</feature>
<evidence type="ECO:0000255" key="1">
    <source>
        <dbReference type="HAMAP-Rule" id="MF_01261"/>
    </source>
</evidence>
<reference key="1">
    <citation type="journal article" date="2006" name="J. Bacteriol.">
        <title>Complete genome sequence of Yersinia pestis strains Antiqua and Nepal516: evidence of gene reduction in an emerging pathogen.</title>
        <authorList>
            <person name="Chain P.S.G."/>
            <person name="Hu P."/>
            <person name="Malfatti S.A."/>
            <person name="Radnedge L."/>
            <person name="Larimer F."/>
            <person name="Vergez L.M."/>
            <person name="Worsham P."/>
            <person name="Chu M.C."/>
            <person name="Andersen G.L."/>
        </authorList>
    </citation>
    <scope>NUCLEOTIDE SEQUENCE [LARGE SCALE GENOMIC DNA]</scope>
    <source>
        <strain>Antiqua</strain>
    </source>
</reference>
<proteinExistence type="inferred from homology"/>
<sequence length="412" mass="46289">MNIYLVGGAVRDSLLNLPVTEQDWVVVGATPEQLLKLGYQQVGKDFPVFLHPVSHEEYALARTERKSGQGYTGFTCYAAPDVTLEDDLLRRDLTVNAIARSADGEFIDPYHGKQDLENRVLRHVSDAFGEDPLRVLRVARFAARFAYLGFTIAPETMSLMSNMAQSGELSALTPERVWKETEKALKTQSPHVYFQVLRDCGALAVLFPEIERLFGVPAPEKWHPEIDTGIHTLMTLAIAAQLSPEVDIRFAALCHDLGKGLTPKEHWPHHHGHGPAGVKLVEQLCQRLRIPNPVRDLAKLVAEYHDLIHTVNKLRPETLLKLFNAIDVWRKPERLEQMIMTSEADARGRTGFENNPYPQGDYLRAAFQIANGVSIQEVVASGLQGLAIRDELQRRRQQALAEWKQTQETASI</sequence>